<feature type="chain" id="PRO_0000040461" description="Nuclear inclusion protein B" evidence="1">
    <location>
        <begin position="1" status="less than"/>
        <end position="11"/>
    </location>
</feature>
<feature type="chain" id="PRO_0000420028" description="Genome polyprotein">
    <location>
        <begin position="1"/>
        <end position="279"/>
    </location>
</feature>
<feature type="chain" id="PRO_0000040462" description="Capsid protein" evidence="1">
    <location>
        <begin position="12"/>
        <end position="279"/>
    </location>
</feature>
<feature type="site" description="Cleavage; by NIa-pro" evidence="1">
    <location>
        <begin position="11"/>
        <end position="12"/>
    </location>
</feature>
<feature type="non-terminal residue">
    <location>
        <position position="1"/>
    </location>
</feature>
<reference key="1">
    <citation type="journal article" date="1990" name="Nucleic Acids Res.">
        <title>Nucleotide sequence of the tamarillo mosaic virus coat protein gene.</title>
        <authorList>
            <person name="Eagles R.M."/>
            <person name="Gardner R.C."/>
            <person name="Forster R.L.S."/>
        </authorList>
    </citation>
    <scope>NUCLEOTIDE SEQUENCE [GENOMIC RNA]</scope>
    <scope>PROTEIN SEQUENCE OF 11-20</scope>
</reference>
<reference key="2">
    <citation type="journal article" date="2001" name="Virus Res.">
        <title>Potyvirus proteins: a wealth of functions.</title>
        <authorList>
            <person name="Urcuqui-Inchima S."/>
            <person name="Haenni A.L."/>
            <person name="Bernardi F."/>
        </authorList>
    </citation>
    <scope>REVIEW</scope>
</reference>
<keyword id="KW-0167">Capsid protein</keyword>
<keyword id="KW-0903">Direct protein sequencing</keyword>
<keyword id="KW-0548">Nucleotidyltransferase</keyword>
<keyword id="KW-0696">RNA-directed RNA polymerase</keyword>
<keyword id="KW-0808">Transferase</keyword>
<keyword id="KW-0946">Virion</keyword>
<comment type="function">
    <molecule>Nuclear inclusion protein B</molecule>
    <text>An RNA-dependent RNA polymerase that plays an essential role in the virus replication.</text>
</comment>
<comment type="function">
    <molecule>Capsid protein</molecule>
    <text evidence="2">Involved in aphid transmission, cell-to-cell and systemis movement, encapsidation of the viral RNA and in the regulation of viral RNA amplification.</text>
</comment>
<comment type="catalytic activity">
    <reaction evidence="3">
        <text>RNA(n) + a ribonucleoside 5'-triphosphate = RNA(n+1) + diphosphate</text>
        <dbReference type="Rhea" id="RHEA:21248"/>
        <dbReference type="Rhea" id="RHEA-COMP:14527"/>
        <dbReference type="Rhea" id="RHEA-COMP:17342"/>
        <dbReference type="ChEBI" id="CHEBI:33019"/>
        <dbReference type="ChEBI" id="CHEBI:61557"/>
        <dbReference type="ChEBI" id="CHEBI:140395"/>
        <dbReference type="EC" id="2.7.7.48"/>
    </reaction>
</comment>
<comment type="subcellular location">
    <molecule>Capsid protein</molecule>
    <subcellularLocation>
        <location evidence="4">Virion</location>
    </subcellularLocation>
</comment>
<comment type="PTM">
    <text evidence="1">Genome polyprotein of potyviruses undergoes post-translational proteolytic processing by the main proteinase NIa-pro resulting in the production of at least ten individual proteins. The P1 proteinase and the HC-pro cleave only their respective C-termini autocatalytically. 6K1 is essential for proper proteolytic separation of P3 from CI (By similarity).</text>
</comment>
<comment type="similarity">
    <text evidence="4">Belongs to the potyviridae genome polyprotein family.</text>
</comment>
<evidence type="ECO:0000250" key="1"/>
<evidence type="ECO:0000250" key="2">
    <source>
        <dbReference type="UniProtKB" id="P04517"/>
    </source>
</evidence>
<evidence type="ECO:0000255" key="3">
    <source>
        <dbReference type="PROSITE-ProRule" id="PRU00539"/>
    </source>
</evidence>
<evidence type="ECO:0000305" key="4"/>
<sequence>VDEEDDIVYFQAGTLDAGEATAQKAEGKKKEGEVSSGKAVVVKDKDVDLGTAGTHSVPRLKSMTSKLTLPMLKGKSRCNLDHLLSYKQTVDLSNARATHEQFQNWYDGVMASYELEESSMEIILNGFMVWCIENGTSPDINGVWTMMDDEEQISYPLKPMLDHAKPSLRQIMRHFSALAEAYIEMRSREKPYMPRYGLQRNLRDQSLARYAFDFYEITATTPVRAKEAHLQMKAAALKNSNTNMFGLDGNVTTSEEDTERHTATDVNRNMHHLLGVKGV</sequence>
<accession>P22556</accession>
<organismHost>
    <name type="scientific">Solanum betaceum</name>
    <name type="common">Tamarillo</name>
    <name type="synonym">Cyphomandra betacea</name>
    <dbReference type="NCBI Taxonomy" id="45843"/>
</organismHost>
<organismHost>
    <name type="scientific">Solanum nigrum</name>
    <name type="common">Black nightshade</name>
    <dbReference type="NCBI Taxonomy" id="4112"/>
</organismHost>
<organismHost>
    <name type="scientific">Solanum tuberosum</name>
    <name type="common">Potato</name>
    <dbReference type="NCBI Taxonomy" id="4113"/>
</organismHost>
<organism>
    <name type="scientific">Tamarillo mosaic virus</name>
    <dbReference type="NCBI Taxonomy" id="12226"/>
    <lineage>
        <taxon>Viruses</taxon>
        <taxon>Riboviria</taxon>
        <taxon>Orthornavirae</taxon>
        <taxon>Pisuviricota</taxon>
        <taxon>Stelpaviricetes</taxon>
        <taxon>Patatavirales</taxon>
        <taxon>Potyviridae</taxon>
        <taxon>Potyvirus</taxon>
        <taxon>Potato virus A</taxon>
    </lineage>
</organism>
<name>POLG_TAMV</name>
<proteinExistence type="evidence at protein level"/>
<protein>
    <recommendedName>
        <fullName>Genome polyprotein</fullName>
    </recommendedName>
    <component>
        <recommendedName>
            <fullName>Nuclear inclusion protein B</fullName>
            <shortName>NI-B</shortName>
            <shortName>NIB</shortName>
        </recommendedName>
        <alternativeName>
            <fullName>RNA-directed RNA polymerase</fullName>
            <ecNumber>2.7.7.48</ecNumber>
        </alternativeName>
    </component>
    <component>
        <recommendedName>
            <fullName>Capsid protein</fullName>
            <shortName>CP</shortName>
        </recommendedName>
        <alternativeName>
            <fullName>Coat protein</fullName>
        </alternativeName>
    </component>
</protein>
<dbReference type="EC" id="2.7.7.48"/>
<dbReference type="EMBL" id="X54804">
    <property type="protein sequence ID" value="CAA38575.1"/>
    <property type="molecule type" value="Genomic_RNA"/>
</dbReference>
<dbReference type="PIR" id="S13093">
    <property type="entry name" value="S13093"/>
</dbReference>
<dbReference type="SMR" id="P22556"/>
<dbReference type="GO" id="GO:0019028">
    <property type="term" value="C:viral capsid"/>
    <property type="evidence" value="ECO:0007669"/>
    <property type="project" value="UniProtKB-KW"/>
</dbReference>
<dbReference type="GO" id="GO:0003968">
    <property type="term" value="F:RNA-directed RNA polymerase activity"/>
    <property type="evidence" value="ECO:0007669"/>
    <property type="project" value="UniProtKB-KW"/>
</dbReference>
<dbReference type="InterPro" id="IPR001592">
    <property type="entry name" value="Poty_coat"/>
</dbReference>
<dbReference type="Pfam" id="PF00767">
    <property type="entry name" value="Poty_coat"/>
    <property type="match status" value="1"/>
</dbReference>